<gene>
    <name evidence="1" type="primary">rpmE</name>
    <name type="ordered locus">Glov_1026</name>
</gene>
<proteinExistence type="inferred from homology"/>
<sequence>MKEGIHPMYNEVTVKCACGNSFLTRSTRKEIFTEICSACHPFFTGKQKLVDTAGRVERFKKRYGQA</sequence>
<accession>B3E625</accession>
<comment type="function">
    <text evidence="1">Binds the 23S rRNA.</text>
</comment>
<comment type="cofactor">
    <cofactor evidence="1">
        <name>Zn(2+)</name>
        <dbReference type="ChEBI" id="CHEBI:29105"/>
    </cofactor>
    <text evidence="1">Binds 1 zinc ion per subunit.</text>
</comment>
<comment type="subunit">
    <text evidence="1">Part of the 50S ribosomal subunit.</text>
</comment>
<comment type="similarity">
    <text evidence="1">Belongs to the bacterial ribosomal protein bL31 family. Type A subfamily.</text>
</comment>
<feature type="chain" id="PRO_1000126635" description="Large ribosomal subunit protein bL31">
    <location>
        <begin position="1"/>
        <end position="66"/>
    </location>
</feature>
<feature type="binding site" evidence="1">
    <location>
        <position position="16"/>
    </location>
    <ligand>
        <name>Zn(2+)</name>
        <dbReference type="ChEBI" id="CHEBI:29105"/>
    </ligand>
</feature>
<feature type="binding site" evidence="1">
    <location>
        <position position="18"/>
    </location>
    <ligand>
        <name>Zn(2+)</name>
        <dbReference type="ChEBI" id="CHEBI:29105"/>
    </ligand>
</feature>
<feature type="binding site" evidence="1">
    <location>
        <position position="36"/>
    </location>
    <ligand>
        <name>Zn(2+)</name>
        <dbReference type="ChEBI" id="CHEBI:29105"/>
    </ligand>
</feature>
<feature type="binding site" evidence="1">
    <location>
        <position position="39"/>
    </location>
    <ligand>
        <name>Zn(2+)</name>
        <dbReference type="ChEBI" id="CHEBI:29105"/>
    </ligand>
</feature>
<keyword id="KW-0479">Metal-binding</keyword>
<keyword id="KW-1185">Reference proteome</keyword>
<keyword id="KW-0687">Ribonucleoprotein</keyword>
<keyword id="KW-0689">Ribosomal protein</keyword>
<keyword id="KW-0694">RNA-binding</keyword>
<keyword id="KW-0699">rRNA-binding</keyword>
<keyword id="KW-0862">Zinc</keyword>
<reference key="1">
    <citation type="submission" date="2008-05" db="EMBL/GenBank/DDBJ databases">
        <title>Complete sequence of chromosome of Geobacter lovleyi SZ.</title>
        <authorList>
            <consortium name="US DOE Joint Genome Institute"/>
            <person name="Lucas S."/>
            <person name="Copeland A."/>
            <person name="Lapidus A."/>
            <person name="Glavina del Rio T."/>
            <person name="Dalin E."/>
            <person name="Tice H."/>
            <person name="Bruce D."/>
            <person name="Goodwin L."/>
            <person name="Pitluck S."/>
            <person name="Chertkov O."/>
            <person name="Meincke L."/>
            <person name="Brettin T."/>
            <person name="Detter J.C."/>
            <person name="Han C."/>
            <person name="Tapia R."/>
            <person name="Kuske C.R."/>
            <person name="Schmutz J."/>
            <person name="Larimer F."/>
            <person name="Land M."/>
            <person name="Hauser L."/>
            <person name="Kyrpides N."/>
            <person name="Mikhailova N."/>
            <person name="Sung Y."/>
            <person name="Fletcher K.E."/>
            <person name="Ritalahti K.M."/>
            <person name="Loeffler F.E."/>
            <person name="Richardson P."/>
        </authorList>
    </citation>
    <scope>NUCLEOTIDE SEQUENCE [LARGE SCALE GENOMIC DNA]</scope>
    <source>
        <strain>ATCC BAA-1151 / DSM 17278 / SZ</strain>
    </source>
</reference>
<organism>
    <name type="scientific">Trichlorobacter lovleyi (strain ATCC BAA-1151 / DSM 17278 / SZ)</name>
    <name type="common">Geobacter lovleyi</name>
    <dbReference type="NCBI Taxonomy" id="398767"/>
    <lineage>
        <taxon>Bacteria</taxon>
        <taxon>Pseudomonadati</taxon>
        <taxon>Thermodesulfobacteriota</taxon>
        <taxon>Desulfuromonadia</taxon>
        <taxon>Geobacterales</taxon>
        <taxon>Geobacteraceae</taxon>
        <taxon>Trichlorobacter</taxon>
    </lineage>
</organism>
<dbReference type="EMBL" id="CP001089">
    <property type="protein sequence ID" value="ACD94749.1"/>
    <property type="molecule type" value="Genomic_DNA"/>
</dbReference>
<dbReference type="RefSeq" id="WP_012469099.1">
    <property type="nucleotide sequence ID" value="NC_010814.1"/>
</dbReference>
<dbReference type="SMR" id="B3E625"/>
<dbReference type="STRING" id="398767.Glov_1026"/>
<dbReference type="KEGG" id="glo:Glov_1026"/>
<dbReference type="eggNOG" id="COG0254">
    <property type="taxonomic scope" value="Bacteria"/>
</dbReference>
<dbReference type="HOGENOM" id="CLU_114306_4_3_7"/>
<dbReference type="OrthoDB" id="9803251at2"/>
<dbReference type="Proteomes" id="UP000002420">
    <property type="component" value="Chromosome"/>
</dbReference>
<dbReference type="GO" id="GO:1990904">
    <property type="term" value="C:ribonucleoprotein complex"/>
    <property type="evidence" value="ECO:0007669"/>
    <property type="project" value="UniProtKB-KW"/>
</dbReference>
<dbReference type="GO" id="GO:0005840">
    <property type="term" value="C:ribosome"/>
    <property type="evidence" value="ECO:0007669"/>
    <property type="project" value="UniProtKB-KW"/>
</dbReference>
<dbReference type="GO" id="GO:0046872">
    <property type="term" value="F:metal ion binding"/>
    <property type="evidence" value="ECO:0007669"/>
    <property type="project" value="UniProtKB-KW"/>
</dbReference>
<dbReference type="GO" id="GO:0019843">
    <property type="term" value="F:rRNA binding"/>
    <property type="evidence" value="ECO:0007669"/>
    <property type="project" value="UniProtKB-KW"/>
</dbReference>
<dbReference type="GO" id="GO:0003735">
    <property type="term" value="F:structural constituent of ribosome"/>
    <property type="evidence" value="ECO:0007669"/>
    <property type="project" value="InterPro"/>
</dbReference>
<dbReference type="GO" id="GO:0006412">
    <property type="term" value="P:translation"/>
    <property type="evidence" value="ECO:0007669"/>
    <property type="project" value="UniProtKB-UniRule"/>
</dbReference>
<dbReference type="Gene3D" id="4.10.830.30">
    <property type="entry name" value="Ribosomal protein L31"/>
    <property type="match status" value="1"/>
</dbReference>
<dbReference type="HAMAP" id="MF_00501">
    <property type="entry name" value="Ribosomal_bL31_1"/>
    <property type="match status" value="1"/>
</dbReference>
<dbReference type="InterPro" id="IPR034704">
    <property type="entry name" value="Ribosomal_bL28/bL31-like_sf"/>
</dbReference>
<dbReference type="InterPro" id="IPR002150">
    <property type="entry name" value="Ribosomal_bL31"/>
</dbReference>
<dbReference type="InterPro" id="IPR027491">
    <property type="entry name" value="Ribosomal_bL31_A"/>
</dbReference>
<dbReference type="InterPro" id="IPR042105">
    <property type="entry name" value="Ribosomal_bL31_sf"/>
</dbReference>
<dbReference type="NCBIfam" id="TIGR00105">
    <property type="entry name" value="L31"/>
    <property type="match status" value="1"/>
</dbReference>
<dbReference type="NCBIfam" id="NF000612">
    <property type="entry name" value="PRK00019.1"/>
    <property type="match status" value="1"/>
</dbReference>
<dbReference type="NCBIfam" id="NF001809">
    <property type="entry name" value="PRK00528.1"/>
    <property type="match status" value="1"/>
</dbReference>
<dbReference type="PANTHER" id="PTHR33280">
    <property type="entry name" value="50S RIBOSOMAL PROTEIN L31, CHLOROPLASTIC"/>
    <property type="match status" value="1"/>
</dbReference>
<dbReference type="PANTHER" id="PTHR33280:SF6">
    <property type="entry name" value="LARGE RIBOSOMAL SUBUNIT PROTEIN BL31A"/>
    <property type="match status" value="1"/>
</dbReference>
<dbReference type="Pfam" id="PF01197">
    <property type="entry name" value="Ribosomal_L31"/>
    <property type="match status" value="1"/>
</dbReference>
<dbReference type="PRINTS" id="PR01249">
    <property type="entry name" value="RIBOSOMALL31"/>
</dbReference>
<dbReference type="SUPFAM" id="SSF143800">
    <property type="entry name" value="L28p-like"/>
    <property type="match status" value="1"/>
</dbReference>
<dbReference type="PROSITE" id="PS01143">
    <property type="entry name" value="RIBOSOMAL_L31"/>
    <property type="match status" value="1"/>
</dbReference>
<name>RL31_TRIL1</name>
<evidence type="ECO:0000255" key="1">
    <source>
        <dbReference type="HAMAP-Rule" id="MF_00501"/>
    </source>
</evidence>
<evidence type="ECO:0000305" key="2"/>
<protein>
    <recommendedName>
        <fullName evidence="1">Large ribosomal subunit protein bL31</fullName>
    </recommendedName>
    <alternativeName>
        <fullName evidence="2">50S ribosomal protein L31</fullName>
    </alternativeName>
</protein>